<dbReference type="EC" id="3.4.24.50"/>
<dbReference type="PIR" id="A32414">
    <property type="entry name" value="A32414"/>
</dbReference>
<dbReference type="MEROPS" id="M12.139"/>
<dbReference type="GO" id="GO:0005576">
    <property type="term" value="C:extracellular region"/>
    <property type="evidence" value="ECO:0007669"/>
    <property type="project" value="UniProtKB-SubCell"/>
</dbReference>
<dbReference type="GO" id="GO:0046872">
    <property type="term" value="F:metal ion binding"/>
    <property type="evidence" value="ECO:0007669"/>
    <property type="project" value="UniProtKB-KW"/>
</dbReference>
<dbReference type="GO" id="GO:0008237">
    <property type="term" value="F:metallopeptidase activity"/>
    <property type="evidence" value="ECO:0007669"/>
    <property type="project" value="UniProtKB-KW"/>
</dbReference>
<dbReference type="GO" id="GO:0090729">
    <property type="term" value="F:toxin activity"/>
    <property type="evidence" value="ECO:0007669"/>
    <property type="project" value="UniProtKB-KW"/>
</dbReference>
<dbReference type="GO" id="GO:0006508">
    <property type="term" value="P:proteolysis"/>
    <property type="evidence" value="ECO:0007669"/>
    <property type="project" value="UniProtKB-KW"/>
</dbReference>
<dbReference type="SUPFAM" id="SSF55486">
    <property type="entry name" value="Metalloproteases ('zincins'), catalytic domain"/>
    <property type="match status" value="1"/>
</dbReference>
<feature type="chain" id="PRO_0000078200" description="Snake venom metalloproteinase bothrolysin">
    <location>
        <begin position="1"/>
        <end position="29" status="greater than"/>
    </location>
</feature>
<feature type="domain" description="Peptidase M12B" evidence="2">
    <location>
        <begin position="6"/>
        <end position="29" status="greater than"/>
    </location>
</feature>
<feature type="binding site" evidence="1">
    <location>
        <position position="9"/>
    </location>
    <ligand>
        <name>Ca(2+)</name>
        <dbReference type="ChEBI" id="CHEBI:29108"/>
    </ligand>
</feature>
<feature type="non-terminal residue">
    <location>
        <position position="29"/>
    </location>
</feature>
<proteinExistence type="evidence at protein level"/>
<keyword id="KW-0106">Calcium</keyword>
<keyword id="KW-0903">Direct protein sequencing</keyword>
<keyword id="KW-1199">Hemostasis impairing toxin</keyword>
<keyword id="KW-0378">Hydrolase</keyword>
<keyword id="KW-0479">Metal-binding</keyword>
<keyword id="KW-0482">Metalloprotease</keyword>
<keyword id="KW-0645">Protease</keyword>
<keyword id="KW-0964">Secreted</keyword>
<keyword id="KW-0800">Toxin</keyword>
<keyword id="KW-0862">Zinc</keyword>
<sequence length="29" mass="3433">TPEHQRYIELFLVVDSGMFMKYNGNSDKI</sequence>
<name>VMXBN_BOTJA</name>
<reference key="1">
    <citation type="journal article" date="1989" name="Toxicon">
        <title>Purification and some characteristics of a zinc metalloprotease from the venom of Bothrops jararaca (jararaca).</title>
        <authorList>
            <person name="Tanizaki M.M."/>
            <person name="Zingali R.B."/>
            <person name="Kawazaki H."/>
            <person name="Imajoh S."/>
            <person name="Yamazaki S."/>
            <person name="Suzuki K."/>
        </authorList>
    </citation>
    <scope>PROTEIN SEQUENCE</scope>
    <source>
        <tissue>Venom</tissue>
    </source>
</reference>
<comment type="function">
    <text>Snake venom zinc metalloproteinase that impairs hemostasis in the envenomed animal.</text>
</comment>
<comment type="catalytic activity">
    <reaction>
        <text>Cleavage of 4-Gln-|-His-5, 9-Ser-|-His-10 and 14-Ala-|-Leu-15 of insulin B chain and Pro-|-Phe of angiotensin I.</text>
        <dbReference type="EC" id="3.4.24.50"/>
    </reaction>
</comment>
<comment type="cofactor">
    <cofactor evidence="3">
        <name>Zn(2+)</name>
        <dbReference type="ChEBI" id="CHEBI:29105"/>
    </cofactor>
    <text evidence="3">Binds 1 zinc ion per subunit.</text>
</comment>
<comment type="subcellular location">
    <subcellularLocation>
        <location>Secreted</location>
    </subcellularLocation>
</comment>
<comment type="tissue specificity">
    <text>Expressed by the venom gland.</text>
</comment>
<comment type="similarity">
    <text evidence="3">Belongs to the venom metalloproteinase (M12B) family.</text>
</comment>
<organism>
    <name type="scientific">Bothrops jararaca</name>
    <name type="common">Jararaca</name>
    <name type="synonym">Bothrops jajaraca</name>
    <dbReference type="NCBI Taxonomy" id="8724"/>
    <lineage>
        <taxon>Eukaryota</taxon>
        <taxon>Metazoa</taxon>
        <taxon>Chordata</taxon>
        <taxon>Craniata</taxon>
        <taxon>Vertebrata</taxon>
        <taxon>Euteleostomi</taxon>
        <taxon>Lepidosauria</taxon>
        <taxon>Squamata</taxon>
        <taxon>Bifurcata</taxon>
        <taxon>Unidentata</taxon>
        <taxon>Episquamata</taxon>
        <taxon>Toxicofera</taxon>
        <taxon>Serpentes</taxon>
        <taxon>Colubroidea</taxon>
        <taxon>Viperidae</taxon>
        <taxon>Crotalinae</taxon>
        <taxon>Bothrops</taxon>
    </lineage>
</organism>
<protein>
    <recommendedName>
        <fullName>Snake venom metalloproteinase bothrolysin</fullName>
        <shortName>SVMP</shortName>
        <ecNumber>3.4.24.50</ecNumber>
    </recommendedName>
    <alternativeName>
        <fullName>Hemorrhagic metalloproteinase J</fullName>
    </alternativeName>
    <alternativeName>
        <fullName>Zinc metalloproteinase bothrolysin</fullName>
    </alternativeName>
</protein>
<evidence type="ECO:0000250" key="1"/>
<evidence type="ECO:0000255" key="2">
    <source>
        <dbReference type="PROSITE-ProRule" id="PRU00276"/>
    </source>
</evidence>
<evidence type="ECO:0000305" key="3"/>
<accession>P20416</accession>